<keyword id="KW-0903">Direct protein sequencing</keyword>
<keyword id="KW-0388">IgA-binding protein</keyword>
<keyword id="KW-0430">Lectin</keyword>
<reference evidence="5" key="1">
    <citation type="submission" date="2002-07" db="UniProtKB">
        <title>Purification and characterisation of Morus nigra agglutinins I and II.</title>
        <authorList>
            <person name="Angel C.E."/>
            <person name="Pickford W.J."/>
            <person name="Grant G."/>
            <person name="Kelly D."/>
        </authorList>
    </citation>
    <scope>PROTEIN SEQUENCE</scope>
    <scope>FUNCTION</scope>
    <source>
        <tissue evidence="3">Bark</tissue>
        <tissue evidence="3">Root</tissue>
    </source>
</reference>
<proteinExistence type="evidence at protein level"/>
<feature type="chain" id="PRO_0000273268" description="Agglutinin alpha-1 chain">
    <location>
        <begin position="1"/>
        <end position="30" status="greater than"/>
    </location>
</feature>
<feature type="domain" description="Jacalin-type lectin" evidence="2">
    <location>
        <begin position="1"/>
        <end position="30"/>
    </location>
</feature>
<feature type="non-terminal residue" evidence="4">
    <location>
        <position position="30"/>
    </location>
</feature>
<accession>P83422</accession>
<sequence length="30" mass="3291">GVAFDDGSYTGIREINFEYNRETAIGGXQV</sequence>
<dbReference type="GO" id="GO:0030246">
    <property type="term" value="F:carbohydrate binding"/>
    <property type="evidence" value="ECO:0007669"/>
    <property type="project" value="UniProtKB-KW"/>
</dbReference>
<dbReference type="GO" id="GO:0019862">
    <property type="term" value="F:IgA binding"/>
    <property type="evidence" value="ECO:0007669"/>
    <property type="project" value="UniProtKB-KW"/>
</dbReference>
<dbReference type="InterPro" id="IPR001229">
    <property type="entry name" value="Jacalin-like_lectin_dom"/>
</dbReference>
<dbReference type="PROSITE" id="PS51752">
    <property type="entry name" value="JACALIN_LECTIN"/>
    <property type="match status" value="1"/>
</dbReference>
<name>LEC1A_MORNI</name>
<protein>
    <recommendedName>
        <fullName>Agglutinin alpha-1 chain</fullName>
    </recommendedName>
    <alternativeName>
        <fullName>Agglutinin I alpha chain</fullName>
    </alternativeName>
    <alternativeName>
        <fullName>MNA I alpha</fullName>
    </alternativeName>
</protein>
<comment type="function">
    <text evidence="3">N-acetyl-galactosamine and D-galactose specific lectin. Binds the Tn-antigen structure GalNAc-alpha-1-O-Ser, the T-antigen structure Gal-beta1-3-GalNAc and IgA.</text>
</comment>
<comment type="subunit">
    <text evidence="1">Tetramer of four alpha chains associated with two or four beta chains.</text>
</comment>
<comment type="similarity">
    <text evidence="2">Belongs to the jacalin lectin family.</text>
</comment>
<organism>
    <name type="scientific">Morus nigra</name>
    <name type="common">Black mulberry</name>
    <dbReference type="NCBI Taxonomy" id="85232"/>
    <lineage>
        <taxon>Eukaryota</taxon>
        <taxon>Viridiplantae</taxon>
        <taxon>Streptophyta</taxon>
        <taxon>Embryophyta</taxon>
        <taxon>Tracheophyta</taxon>
        <taxon>Spermatophyta</taxon>
        <taxon>Magnoliopsida</taxon>
        <taxon>eudicotyledons</taxon>
        <taxon>Gunneridae</taxon>
        <taxon>Pentapetalae</taxon>
        <taxon>rosids</taxon>
        <taxon>fabids</taxon>
        <taxon>Rosales</taxon>
        <taxon>Moraceae</taxon>
        <taxon>Moreae</taxon>
        <taxon>Morus</taxon>
    </lineage>
</organism>
<evidence type="ECO:0000250" key="1">
    <source>
        <dbReference type="UniProtKB" id="P18670"/>
    </source>
</evidence>
<evidence type="ECO:0000255" key="2">
    <source>
        <dbReference type="PROSITE-ProRule" id="PRU01088"/>
    </source>
</evidence>
<evidence type="ECO:0000269" key="3">
    <source ref="1"/>
</evidence>
<evidence type="ECO:0000303" key="4">
    <source ref="1"/>
</evidence>
<evidence type="ECO:0000305" key="5"/>